<gene>
    <name type="primary">dys</name>
    <name type="synonym">dhs</name>
    <name type="ordered locus">VNG_1432G</name>
</gene>
<reference key="1">
    <citation type="journal article" date="2000" name="Proc. Natl. Acad. Sci. U.S.A.">
        <title>Genome sequence of Halobacterium species NRC-1.</title>
        <authorList>
            <person name="Ng W.V."/>
            <person name="Kennedy S.P."/>
            <person name="Mahairas G.G."/>
            <person name="Berquist B."/>
            <person name="Pan M."/>
            <person name="Shukla H.D."/>
            <person name="Lasky S.R."/>
            <person name="Baliga N.S."/>
            <person name="Thorsson V."/>
            <person name="Sbrogna J."/>
            <person name="Swartzell S."/>
            <person name="Weir D."/>
            <person name="Hall J."/>
            <person name="Dahl T.A."/>
            <person name="Welti R."/>
            <person name="Goo Y.A."/>
            <person name="Leithauser B."/>
            <person name="Keller K."/>
            <person name="Cruz R."/>
            <person name="Danson M.J."/>
            <person name="Hough D.W."/>
            <person name="Maddocks D.G."/>
            <person name="Jablonski P.E."/>
            <person name="Krebs M.P."/>
            <person name="Angevine C.M."/>
            <person name="Dale H."/>
            <person name="Isenbarger T.A."/>
            <person name="Peck R.F."/>
            <person name="Pohlschroder M."/>
            <person name="Spudich J.L."/>
            <person name="Jung K.-H."/>
            <person name="Alam M."/>
            <person name="Freitas T."/>
            <person name="Hou S."/>
            <person name="Daniels C.J."/>
            <person name="Dennis P.P."/>
            <person name="Omer A.D."/>
            <person name="Ebhardt H."/>
            <person name="Lowe T.M."/>
            <person name="Liang P."/>
            <person name="Riley M."/>
            <person name="Hood L."/>
            <person name="DasSarma S."/>
        </authorList>
    </citation>
    <scope>NUCLEOTIDE SEQUENCE [LARGE SCALE GENOMIC DNA]</scope>
    <source>
        <strain>ATCC 700922 / JCM 11081 / NRC-1</strain>
    </source>
</reference>
<name>DHYS_HALSA</name>
<keyword id="KW-0386">Hypusine biosynthesis</keyword>
<keyword id="KW-0520">NAD</keyword>
<keyword id="KW-1185">Reference proteome</keyword>
<keyword id="KW-0808">Transferase</keyword>
<sequence>MTGDDADETHENVVPGSDEDLDTPDVRGYDFSGEFDFFELLDSYATTGFQASHLADAVDITREMREDDATIYLTLTSNIVSSGLREVVAHLVRENYVDVIITTSGSLTEDIIKTAKPFKMGEWDVDEAALREEGINRLGNIFVPSDRYVWLEEYLYDFFEEFFADQKVRTPTAFARELGATLDDEDSILKNAADNDIPVFCPALTDAEIGNFLYYYRQGYDSEVGIEILDDYDALIEEGLLADTTGLICVGAGVPKHHAIMTNLFRGGADYAVYISTGMEGDGSLSGAPPEEAVSWGKIKDEDAEPNYALIEAEATLVFPLLVAGAFENP</sequence>
<comment type="function">
    <text evidence="1">Catalyzes the NAD-dependent oxidative cleavage of spermidine and the subsequent transfer of the butylamine moiety of spermidine to the epsilon-amino group of a specific lysine residue of the eIF-5A precursor protein to form the intermediate deoxyhypusine residue.</text>
</comment>
<comment type="catalytic activity">
    <reaction>
        <text>[eIF5A protein]-L-lysine + spermidine = [eIF5A protein]-deoxyhypusine + propane-1,3-diamine</text>
        <dbReference type="Rhea" id="RHEA:33299"/>
        <dbReference type="Rhea" id="RHEA-COMP:10143"/>
        <dbReference type="Rhea" id="RHEA-COMP:10144"/>
        <dbReference type="ChEBI" id="CHEBI:29969"/>
        <dbReference type="ChEBI" id="CHEBI:57484"/>
        <dbReference type="ChEBI" id="CHEBI:57834"/>
        <dbReference type="ChEBI" id="CHEBI:82657"/>
        <dbReference type="EC" id="2.5.1.46"/>
    </reaction>
</comment>
<comment type="cofactor">
    <cofactor evidence="1">
        <name>NAD(+)</name>
        <dbReference type="ChEBI" id="CHEBI:57540"/>
    </cofactor>
</comment>
<comment type="pathway">
    <text>Protein modification; eIF5A hypusination.</text>
</comment>
<comment type="similarity">
    <text evidence="3">Belongs to the deoxyhypusine synthase family.</text>
</comment>
<proteinExistence type="inferred from homology"/>
<feature type="chain" id="PRO_0000134492" description="Probable deoxyhypusine synthase">
    <location>
        <begin position="1"/>
        <end position="330"/>
    </location>
</feature>
<feature type="region of interest" description="Disordered" evidence="2">
    <location>
        <begin position="1"/>
        <end position="25"/>
    </location>
</feature>
<feature type="active site" description="Nucleophile" evidence="1">
    <location>
        <position position="298"/>
    </location>
</feature>
<organism>
    <name type="scientific">Halobacterium salinarum (strain ATCC 700922 / JCM 11081 / NRC-1)</name>
    <name type="common">Halobacterium halobium</name>
    <dbReference type="NCBI Taxonomy" id="64091"/>
    <lineage>
        <taxon>Archaea</taxon>
        <taxon>Methanobacteriati</taxon>
        <taxon>Methanobacteriota</taxon>
        <taxon>Stenosarchaea group</taxon>
        <taxon>Halobacteria</taxon>
        <taxon>Halobacteriales</taxon>
        <taxon>Halobacteriaceae</taxon>
        <taxon>Halobacterium</taxon>
        <taxon>Halobacterium salinarum NRC-34001</taxon>
    </lineage>
</organism>
<dbReference type="EC" id="2.5.1.46"/>
<dbReference type="EMBL" id="AE004437">
    <property type="protein sequence ID" value="AAG19745.1"/>
    <property type="molecule type" value="Genomic_DNA"/>
</dbReference>
<dbReference type="PIR" id="E84297">
    <property type="entry name" value="E84297"/>
</dbReference>
<dbReference type="RefSeq" id="WP_010903042.1">
    <property type="nucleotide sequence ID" value="NC_002607.1"/>
</dbReference>
<dbReference type="SMR" id="Q9HPX2"/>
<dbReference type="FunCoup" id="Q9HPX2">
    <property type="interactions" value="160"/>
</dbReference>
<dbReference type="STRING" id="64091.VNG_1432G"/>
<dbReference type="PaxDb" id="64091-VNG_1432G"/>
<dbReference type="KEGG" id="hal:VNG_1432G"/>
<dbReference type="PATRIC" id="fig|64091.14.peg.1095"/>
<dbReference type="HOGENOM" id="CLU_039781_0_0_2"/>
<dbReference type="InParanoid" id="Q9HPX2"/>
<dbReference type="OrthoDB" id="17730at2157"/>
<dbReference type="PhylomeDB" id="Q9HPX2"/>
<dbReference type="UniPathway" id="UPA00354"/>
<dbReference type="Proteomes" id="UP000000554">
    <property type="component" value="Chromosome"/>
</dbReference>
<dbReference type="GO" id="GO:0005737">
    <property type="term" value="C:cytoplasm"/>
    <property type="evidence" value="ECO:0000318"/>
    <property type="project" value="GO_Central"/>
</dbReference>
<dbReference type="GO" id="GO:0034038">
    <property type="term" value="F:deoxyhypusine synthase activity"/>
    <property type="evidence" value="ECO:0000318"/>
    <property type="project" value="GO_Central"/>
</dbReference>
<dbReference type="GO" id="GO:0008216">
    <property type="term" value="P:spermidine metabolic process"/>
    <property type="evidence" value="ECO:0000318"/>
    <property type="project" value="GO_Central"/>
</dbReference>
<dbReference type="FunFam" id="3.40.910.10:FF:000010">
    <property type="entry name" value="Deoxyhypusine synthase"/>
    <property type="match status" value="1"/>
</dbReference>
<dbReference type="Gene3D" id="3.40.910.10">
    <property type="entry name" value="Deoxyhypusine synthase"/>
    <property type="match status" value="1"/>
</dbReference>
<dbReference type="HAMAP" id="MF_00153">
    <property type="entry name" value="DHS"/>
    <property type="match status" value="1"/>
</dbReference>
<dbReference type="InterPro" id="IPR022899">
    <property type="entry name" value="Deoxyhypus_synthase_arc"/>
</dbReference>
<dbReference type="InterPro" id="IPR002773">
    <property type="entry name" value="Deoxyhypusine_synthase"/>
</dbReference>
<dbReference type="InterPro" id="IPR036982">
    <property type="entry name" value="Deoxyhypusine_synthase_sf"/>
</dbReference>
<dbReference type="InterPro" id="IPR029035">
    <property type="entry name" value="DHS-like_NAD/FAD-binding_dom"/>
</dbReference>
<dbReference type="NCBIfam" id="TIGR00321">
    <property type="entry name" value="dhys"/>
    <property type="match status" value="1"/>
</dbReference>
<dbReference type="NCBIfam" id="NF003052">
    <property type="entry name" value="PRK03971.1"/>
    <property type="match status" value="1"/>
</dbReference>
<dbReference type="PANTHER" id="PTHR11703">
    <property type="entry name" value="DEOXYHYPUSINE SYNTHASE"/>
    <property type="match status" value="1"/>
</dbReference>
<dbReference type="PANTHER" id="PTHR11703:SF0">
    <property type="entry name" value="DEOXYHYPUSINE SYNTHASE"/>
    <property type="match status" value="1"/>
</dbReference>
<dbReference type="Pfam" id="PF01916">
    <property type="entry name" value="DS"/>
    <property type="match status" value="1"/>
</dbReference>
<dbReference type="SUPFAM" id="SSF52467">
    <property type="entry name" value="DHS-like NAD/FAD-binding domain"/>
    <property type="match status" value="1"/>
</dbReference>
<evidence type="ECO:0000250" key="1"/>
<evidence type="ECO:0000256" key="2">
    <source>
        <dbReference type="SAM" id="MobiDB-lite"/>
    </source>
</evidence>
<evidence type="ECO:0000305" key="3"/>
<protein>
    <recommendedName>
        <fullName>Probable deoxyhypusine synthase</fullName>
        <shortName>DHS</shortName>
        <ecNumber>2.5.1.46</ecNumber>
    </recommendedName>
</protein>
<accession>Q9HPX2</accession>